<evidence type="ECO:0000255" key="1">
    <source>
        <dbReference type="HAMAP-Rule" id="MF_00501"/>
    </source>
</evidence>
<evidence type="ECO:0000305" key="2"/>
<reference key="1">
    <citation type="journal article" date="1998" name="Nature">
        <title>The complete genome of the hyperthermophilic bacterium Aquifex aeolicus.</title>
        <authorList>
            <person name="Deckert G."/>
            <person name="Warren P.V."/>
            <person name="Gaasterland T."/>
            <person name="Young W.G."/>
            <person name="Lenox A.L."/>
            <person name="Graham D.E."/>
            <person name="Overbeek R."/>
            <person name="Snead M.A."/>
            <person name="Keller M."/>
            <person name="Aujay M."/>
            <person name="Huber R."/>
            <person name="Feldman R.A."/>
            <person name="Short J.M."/>
            <person name="Olsen G.J."/>
            <person name="Swanson R.V."/>
        </authorList>
    </citation>
    <scope>NUCLEOTIDE SEQUENCE [LARGE SCALE GENOMIC DNA]</scope>
    <source>
        <strain>VF5</strain>
    </source>
</reference>
<reference key="2">
    <citation type="unpublished observations" date="2001-11">
        <authorList>
            <person name="Medigue C."/>
            <person name="Bocs S."/>
        </authorList>
    </citation>
    <scope>IDENTIFICATION</scope>
</reference>
<feature type="chain" id="PRO_0000173075" description="Large ribosomal subunit protein bL31">
    <location>
        <begin position="1"/>
        <end position="68"/>
    </location>
</feature>
<feature type="binding site" evidence="1">
    <location>
        <position position="16"/>
    </location>
    <ligand>
        <name>Zn(2+)</name>
        <dbReference type="ChEBI" id="CHEBI:29105"/>
    </ligand>
</feature>
<feature type="binding site" evidence="1">
    <location>
        <position position="18"/>
    </location>
    <ligand>
        <name>Zn(2+)</name>
        <dbReference type="ChEBI" id="CHEBI:29105"/>
    </ligand>
</feature>
<feature type="binding site" evidence="1">
    <location>
        <position position="37"/>
    </location>
    <ligand>
        <name>Zn(2+)</name>
        <dbReference type="ChEBI" id="CHEBI:29105"/>
    </ligand>
</feature>
<feature type="binding site" evidence="1">
    <location>
        <position position="40"/>
    </location>
    <ligand>
        <name>Zn(2+)</name>
        <dbReference type="ChEBI" id="CHEBI:29105"/>
    </ligand>
</feature>
<accession>P58413</accession>
<protein>
    <recommendedName>
        <fullName evidence="1">Large ribosomal subunit protein bL31</fullName>
    </recommendedName>
    <alternativeName>
        <fullName evidence="2">50S ribosomal protein L31</fullName>
    </alternativeName>
</protein>
<organism>
    <name type="scientific">Aquifex aeolicus (strain VF5)</name>
    <dbReference type="NCBI Taxonomy" id="224324"/>
    <lineage>
        <taxon>Bacteria</taxon>
        <taxon>Pseudomonadati</taxon>
        <taxon>Aquificota</taxon>
        <taxon>Aquificia</taxon>
        <taxon>Aquificales</taxon>
        <taxon>Aquificaceae</taxon>
        <taxon>Aquifex</taxon>
    </lineage>
</organism>
<proteinExistence type="inferred from homology"/>
<sequence length="68" mass="7577">MKKGIHPELKPTTFVCGCGNTFTLLSTKGGTVYLEVCNQCHPFYAGKLKIKPAYYEMLAEFEGGKKEE</sequence>
<comment type="function">
    <text evidence="1">Binds the 23S rRNA.</text>
</comment>
<comment type="cofactor">
    <cofactor evidence="1">
        <name>Zn(2+)</name>
        <dbReference type="ChEBI" id="CHEBI:29105"/>
    </cofactor>
    <text evidence="1">Binds 1 zinc ion per subunit.</text>
</comment>
<comment type="subunit">
    <text evidence="1">Part of the 50S ribosomal subunit.</text>
</comment>
<comment type="similarity">
    <text evidence="1">Belongs to the bacterial ribosomal protein bL31 family. Type A subfamily.</text>
</comment>
<dbReference type="EMBL" id="AE000657">
    <property type="status" value="NOT_ANNOTATED_CDS"/>
    <property type="molecule type" value="Genomic_DNA"/>
</dbReference>
<dbReference type="RefSeq" id="NP_213593.1">
    <property type="nucleotide sequence ID" value="NC_000918.1"/>
</dbReference>
<dbReference type="RefSeq" id="WP_010880531.1">
    <property type="nucleotide sequence ID" value="NC_000918.1"/>
</dbReference>
<dbReference type="SMR" id="P58413"/>
<dbReference type="FunCoup" id="P58413">
    <property type="interactions" value="364"/>
</dbReference>
<dbReference type="KEGG" id="aae:aq_873a"/>
<dbReference type="PATRIC" id="fig|224324.8.peg.681"/>
<dbReference type="InParanoid" id="P58413"/>
<dbReference type="OrthoDB" id="9803251at2"/>
<dbReference type="Proteomes" id="UP000000798">
    <property type="component" value="Chromosome"/>
</dbReference>
<dbReference type="GO" id="GO:1990904">
    <property type="term" value="C:ribonucleoprotein complex"/>
    <property type="evidence" value="ECO:0007669"/>
    <property type="project" value="UniProtKB-KW"/>
</dbReference>
<dbReference type="GO" id="GO:0005840">
    <property type="term" value="C:ribosome"/>
    <property type="evidence" value="ECO:0007669"/>
    <property type="project" value="UniProtKB-KW"/>
</dbReference>
<dbReference type="GO" id="GO:0046872">
    <property type="term" value="F:metal ion binding"/>
    <property type="evidence" value="ECO:0007669"/>
    <property type="project" value="UniProtKB-KW"/>
</dbReference>
<dbReference type="GO" id="GO:0019843">
    <property type="term" value="F:rRNA binding"/>
    <property type="evidence" value="ECO:0007669"/>
    <property type="project" value="UniProtKB-KW"/>
</dbReference>
<dbReference type="GO" id="GO:0003735">
    <property type="term" value="F:structural constituent of ribosome"/>
    <property type="evidence" value="ECO:0007669"/>
    <property type="project" value="InterPro"/>
</dbReference>
<dbReference type="GO" id="GO:0006412">
    <property type="term" value="P:translation"/>
    <property type="evidence" value="ECO:0007669"/>
    <property type="project" value="UniProtKB-UniRule"/>
</dbReference>
<dbReference type="Gene3D" id="4.10.80.400">
    <property type="match status" value="1"/>
</dbReference>
<dbReference type="HAMAP" id="MF_00501">
    <property type="entry name" value="Ribosomal_bL31_1"/>
    <property type="match status" value="1"/>
</dbReference>
<dbReference type="InterPro" id="IPR034704">
    <property type="entry name" value="Ribosomal_bL28/bL31-like_sf"/>
</dbReference>
<dbReference type="InterPro" id="IPR002150">
    <property type="entry name" value="Ribosomal_bL31"/>
</dbReference>
<dbReference type="InterPro" id="IPR027491">
    <property type="entry name" value="Ribosomal_bL31_A"/>
</dbReference>
<dbReference type="NCBIfam" id="TIGR00105">
    <property type="entry name" value="L31"/>
    <property type="match status" value="1"/>
</dbReference>
<dbReference type="Pfam" id="PF01197">
    <property type="entry name" value="Ribosomal_L31"/>
    <property type="match status" value="1"/>
</dbReference>
<dbReference type="PRINTS" id="PR01249">
    <property type="entry name" value="RIBOSOMALL31"/>
</dbReference>
<dbReference type="SUPFAM" id="SSF143800">
    <property type="entry name" value="L28p-like"/>
    <property type="match status" value="1"/>
</dbReference>
<gene>
    <name evidence="1" type="primary">rpmE</name>
    <name type="ordered locus">aq_873.1</name>
</gene>
<keyword id="KW-0479">Metal-binding</keyword>
<keyword id="KW-1185">Reference proteome</keyword>
<keyword id="KW-0687">Ribonucleoprotein</keyword>
<keyword id="KW-0689">Ribosomal protein</keyword>
<keyword id="KW-0694">RNA-binding</keyword>
<keyword id="KW-0699">rRNA-binding</keyword>
<keyword id="KW-0862">Zinc</keyword>
<name>RL31_AQUAE</name>